<protein>
    <recommendedName>
        <fullName evidence="1">3-demethoxyubiquinol 3-hydroxylase</fullName>
        <shortName evidence="1">DMQ hydroxylase</shortName>
        <ecNumber evidence="1">1.14.99.60</ecNumber>
    </recommendedName>
    <alternativeName>
        <fullName evidence="1">2-nonaprenyl-3-methyl-6-methoxy-1,4-benzoquinol hydroxylase</fullName>
    </alternativeName>
</protein>
<gene>
    <name evidence="1" type="primary">coq7</name>
    <name type="ordered locus">CBU_1870</name>
</gene>
<evidence type="ECO:0000255" key="1">
    <source>
        <dbReference type="HAMAP-Rule" id="MF_01658"/>
    </source>
</evidence>
<reference key="1">
    <citation type="journal article" date="2003" name="Proc. Natl. Acad. Sci. U.S.A.">
        <title>Complete genome sequence of the Q-fever pathogen, Coxiella burnetii.</title>
        <authorList>
            <person name="Seshadri R."/>
            <person name="Paulsen I.T."/>
            <person name="Eisen J.A."/>
            <person name="Read T.D."/>
            <person name="Nelson K.E."/>
            <person name="Nelson W.C."/>
            <person name="Ward N.L."/>
            <person name="Tettelin H."/>
            <person name="Davidsen T.M."/>
            <person name="Beanan M.J."/>
            <person name="DeBoy R.T."/>
            <person name="Daugherty S.C."/>
            <person name="Brinkac L.M."/>
            <person name="Madupu R."/>
            <person name="Dodson R.J."/>
            <person name="Khouri H.M."/>
            <person name="Lee K.H."/>
            <person name="Carty H.A."/>
            <person name="Scanlan D."/>
            <person name="Heinzen R.A."/>
            <person name="Thompson H.A."/>
            <person name="Samuel J.E."/>
            <person name="Fraser C.M."/>
            <person name="Heidelberg J.F."/>
        </authorList>
    </citation>
    <scope>NUCLEOTIDE SEQUENCE [LARGE SCALE GENOMIC DNA]</scope>
    <source>
        <strain>RSA 493 / Nine Mile phase I</strain>
    </source>
</reference>
<name>COQ7_COXBU</name>
<sequence length="215" mass="23935">MSNNSRHYSAIDEAILQGQAMLETLFGKPVAQRENPAKGLSQPALTSAEKKQSIGFMRVNHSGEVCAQALYHGQMATAKNPAVRALFTTAAKEETDHLAWCQERLEELGGHTSYLNAFWYTNSFLIGLLAGLSGDPLSLGFVEETEKQVEIHLADHLRKIPSNDLKSRKIVEYMQQDEIQHGLNARSSGAKELPYLVKKLMAFQAKVMTTLAYWI</sequence>
<dbReference type="EC" id="1.14.99.60" evidence="1"/>
<dbReference type="EMBL" id="AE016828">
    <property type="protein sequence ID" value="AAO91361.1"/>
    <property type="molecule type" value="Genomic_DNA"/>
</dbReference>
<dbReference type="RefSeq" id="NP_820847.1">
    <property type="nucleotide sequence ID" value="NC_002971.3"/>
</dbReference>
<dbReference type="RefSeq" id="WP_010958504.1">
    <property type="nucleotide sequence ID" value="NC_002971.4"/>
</dbReference>
<dbReference type="SMR" id="Q83AL3"/>
<dbReference type="STRING" id="227377.CBU_1870"/>
<dbReference type="EnsemblBacteria" id="AAO91361">
    <property type="protein sequence ID" value="AAO91361"/>
    <property type="gene ID" value="CBU_1870"/>
</dbReference>
<dbReference type="GeneID" id="1209783"/>
<dbReference type="KEGG" id="cbu:CBU_1870"/>
<dbReference type="PATRIC" id="fig|227377.7.peg.1852"/>
<dbReference type="eggNOG" id="COG2941">
    <property type="taxonomic scope" value="Bacteria"/>
</dbReference>
<dbReference type="HOGENOM" id="CLU_088601_0_0_6"/>
<dbReference type="OrthoDB" id="5192789at2"/>
<dbReference type="UniPathway" id="UPA00232"/>
<dbReference type="Proteomes" id="UP000002671">
    <property type="component" value="Chromosome"/>
</dbReference>
<dbReference type="GO" id="GO:0005886">
    <property type="term" value="C:plasma membrane"/>
    <property type="evidence" value="ECO:0007669"/>
    <property type="project" value="UniProtKB-SubCell"/>
</dbReference>
<dbReference type="GO" id="GO:0008682">
    <property type="term" value="F:3-demethoxyubiquinol 3-hydroxylase activity"/>
    <property type="evidence" value="ECO:0007669"/>
    <property type="project" value="UniProtKB-EC"/>
</dbReference>
<dbReference type="GO" id="GO:0046872">
    <property type="term" value="F:metal ion binding"/>
    <property type="evidence" value="ECO:0007669"/>
    <property type="project" value="UniProtKB-KW"/>
</dbReference>
<dbReference type="GO" id="GO:0006744">
    <property type="term" value="P:ubiquinone biosynthetic process"/>
    <property type="evidence" value="ECO:0007669"/>
    <property type="project" value="UniProtKB-UniRule"/>
</dbReference>
<dbReference type="CDD" id="cd01042">
    <property type="entry name" value="DMQH"/>
    <property type="match status" value="1"/>
</dbReference>
<dbReference type="Gene3D" id="1.20.1260.10">
    <property type="match status" value="1"/>
</dbReference>
<dbReference type="HAMAP" id="MF_01658">
    <property type="entry name" value="COQ7"/>
    <property type="match status" value="1"/>
</dbReference>
<dbReference type="InterPro" id="IPR047809">
    <property type="entry name" value="COQ7_proteobact"/>
</dbReference>
<dbReference type="InterPro" id="IPR012347">
    <property type="entry name" value="Ferritin-like"/>
</dbReference>
<dbReference type="InterPro" id="IPR009078">
    <property type="entry name" value="Ferritin-like_SF"/>
</dbReference>
<dbReference type="InterPro" id="IPR011566">
    <property type="entry name" value="Ubq_synth_Coq7"/>
</dbReference>
<dbReference type="NCBIfam" id="NF033656">
    <property type="entry name" value="DMQ_monoox_COQ7"/>
    <property type="match status" value="1"/>
</dbReference>
<dbReference type="PANTHER" id="PTHR11237:SF4">
    <property type="entry name" value="5-DEMETHOXYUBIQUINONE HYDROXYLASE, MITOCHONDRIAL"/>
    <property type="match status" value="1"/>
</dbReference>
<dbReference type="PANTHER" id="PTHR11237">
    <property type="entry name" value="COENZYME Q10 BIOSYNTHESIS PROTEIN 7"/>
    <property type="match status" value="1"/>
</dbReference>
<dbReference type="Pfam" id="PF03232">
    <property type="entry name" value="COQ7"/>
    <property type="match status" value="1"/>
</dbReference>
<dbReference type="SUPFAM" id="SSF47240">
    <property type="entry name" value="Ferritin-like"/>
    <property type="match status" value="1"/>
</dbReference>
<comment type="function">
    <text evidence="1">Catalyzes the hydroxylation of 2-nonaprenyl-3-methyl-6-methoxy-1,4-benzoquinol during ubiquinone biosynthesis.</text>
</comment>
<comment type="catalytic activity">
    <reaction evidence="1">
        <text>a 5-methoxy-2-methyl-3-(all-trans-polyprenyl)benzene-1,4-diol + AH2 + O2 = a 3-demethylubiquinol + A + H2O</text>
        <dbReference type="Rhea" id="RHEA:50908"/>
        <dbReference type="Rhea" id="RHEA-COMP:10859"/>
        <dbReference type="Rhea" id="RHEA-COMP:10914"/>
        <dbReference type="ChEBI" id="CHEBI:13193"/>
        <dbReference type="ChEBI" id="CHEBI:15377"/>
        <dbReference type="ChEBI" id="CHEBI:15379"/>
        <dbReference type="ChEBI" id="CHEBI:17499"/>
        <dbReference type="ChEBI" id="CHEBI:84167"/>
        <dbReference type="ChEBI" id="CHEBI:84422"/>
        <dbReference type="EC" id="1.14.99.60"/>
    </reaction>
</comment>
<comment type="cofactor">
    <cofactor evidence="1">
        <name>Fe cation</name>
        <dbReference type="ChEBI" id="CHEBI:24875"/>
    </cofactor>
    <text evidence="1">Binds 2 iron ions per subunit.</text>
</comment>
<comment type="pathway">
    <text evidence="1">Cofactor biosynthesis; ubiquinone biosynthesis.</text>
</comment>
<comment type="subcellular location">
    <subcellularLocation>
        <location evidence="1">Cell membrane</location>
        <topology evidence="1">Peripheral membrane protein</topology>
    </subcellularLocation>
</comment>
<comment type="similarity">
    <text evidence="1">Belongs to the COQ7 family.</text>
</comment>
<organism>
    <name type="scientific">Coxiella burnetii (strain RSA 493 / Nine Mile phase I)</name>
    <dbReference type="NCBI Taxonomy" id="227377"/>
    <lineage>
        <taxon>Bacteria</taxon>
        <taxon>Pseudomonadati</taxon>
        <taxon>Pseudomonadota</taxon>
        <taxon>Gammaproteobacteria</taxon>
        <taxon>Legionellales</taxon>
        <taxon>Coxiellaceae</taxon>
        <taxon>Coxiella</taxon>
    </lineage>
</organism>
<feature type="chain" id="PRO_0000338680" description="3-demethoxyubiquinol 3-hydroxylase">
    <location>
        <begin position="1"/>
        <end position="215"/>
    </location>
</feature>
<feature type="binding site" evidence="1">
    <location>
        <position position="64"/>
    </location>
    <ligand>
        <name>Fe cation</name>
        <dbReference type="ChEBI" id="CHEBI:24875"/>
        <label>1</label>
    </ligand>
</feature>
<feature type="binding site" evidence="1">
    <location>
        <position position="94"/>
    </location>
    <ligand>
        <name>Fe cation</name>
        <dbReference type="ChEBI" id="CHEBI:24875"/>
        <label>1</label>
    </ligand>
</feature>
<feature type="binding site" evidence="1">
    <location>
        <position position="94"/>
    </location>
    <ligand>
        <name>Fe cation</name>
        <dbReference type="ChEBI" id="CHEBI:24875"/>
        <label>2</label>
    </ligand>
</feature>
<feature type="binding site" evidence="1">
    <location>
        <position position="97"/>
    </location>
    <ligand>
        <name>Fe cation</name>
        <dbReference type="ChEBI" id="CHEBI:24875"/>
        <label>1</label>
    </ligand>
</feature>
<feature type="binding site" evidence="1">
    <location>
        <position position="146"/>
    </location>
    <ligand>
        <name>Fe cation</name>
        <dbReference type="ChEBI" id="CHEBI:24875"/>
        <label>2</label>
    </ligand>
</feature>
<feature type="binding site" evidence="1">
    <location>
        <position position="178"/>
    </location>
    <ligand>
        <name>Fe cation</name>
        <dbReference type="ChEBI" id="CHEBI:24875"/>
        <label>1</label>
    </ligand>
</feature>
<feature type="binding site" evidence="1">
    <location>
        <position position="178"/>
    </location>
    <ligand>
        <name>Fe cation</name>
        <dbReference type="ChEBI" id="CHEBI:24875"/>
        <label>2</label>
    </ligand>
</feature>
<feature type="binding site" evidence="1">
    <location>
        <position position="181"/>
    </location>
    <ligand>
        <name>Fe cation</name>
        <dbReference type="ChEBI" id="CHEBI:24875"/>
        <label>2</label>
    </ligand>
</feature>
<proteinExistence type="inferred from homology"/>
<accession>Q83AL3</accession>
<keyword id="KW-1003">Cell membrane</keyword>
<keyword id="KW-0408">Iron</keyword>
<keyword id="KW-0472">Membrane</keyword>
<keyword id="KW-0479">Metal-binding</keyword>
<keyword id="KW-0503">Monooxygenase</keyword>
<keyword id="KW-0560">Oxidoreductase</keyword>
<keyword id="KW-1185">Reference proteome</keyword>
<keyword id="KW-0831">Ubiquinone biosynthesis</keyword>